<keyword id="KW-0002">3D-structure</keyword>
<keyword id="KW-0456">Lyase</keyword>
<keyword id="KW-0460">Magnesium</keyword>
<keyword id="KW-0474">Menaquinone biosynthesis</keyword>
<keyword id="KW-0479">Metal-binding</keyword>
<organism>
    <name type="scientific">Thermobifida fusca (strain YX)</name>
    <dbReference type="NCBI Taxonomy" id="269800"/>
    <lineage>
        <taxon>Bacteria</taxon>
        <taxon>Bacillati</taxon>
        <taxon>Actinomycetota</taxon>
        <taxon>Actinomycetes</taxon>
        <taxon>Streptosporangiales</taxon>
        <taxon>Nocardiopsidaceae</taxon>
        <taxon>Thermobifida</taxon>
    </lineage>
</organism>
<accession>Q47Q21</accession>
<sequence>MTGRAFAIPLRTRFRGITVREGMLVRGAAGWGEFSPFAEYGPRECARWWAACYEAAELGWPAPVRDTVPVNATVPAVGPEEAARIVASSGCTTAKVKVAERGQSEANDVARVEAVRDALGPRGRVRIDVNGAWDVDTAVRMIRLLDRFELEYVEQPCATVDELAEVRRRVSVPIAADESIRRAEDPLRVRDAEAADVVVLKVQPLGGVRAALRLAEECGLPVVVSSAVETSVGLAAGVALAAALPELPYACGLATLRLLHADVCDDPLLPVHGVLPVRRVDVSEQRLAEVEIDPAAWQARLAAARAAWEQVEREPGP</sequence>
<dbReference type="EC" id="4.2.1.113" evidence="1 2 3"/>
<dbReference type="EMBL" id="CP000088">
    <property type="protein sequence ID" value="AAZ55448.1"/>
    <property type="molecule type" value="Genomic_DNA"/>
</dbReference>
<dbReference type="RefSeq" id="WP_011291844.1">
    <property type="nucleotide sequence ID" value="NC_007333.1"/>
</dbReference>
<dbReference type="PDB" id="2OPJ">
    <property type="method" value="X-ray"/>
    <property type="resolution" value="1.60 A"/>
    <property type="chains" value="A=2-317"/>
</dbReference>
<dbReference type="PDB" id="2QVH">
    <property type="method" value="X-ray"/>
    <property type="resolution" value="1.76 A"/>
    <property type="chains" value="A/B=2-317"/>
</dbReference>
<dbReference type="PDBsum" id="2OPJ"/>
<dbReference type="PDBsum" id="2QVH"/>
<dbReference type="SMR" id="Q47Q21"/>
<dbReference type="STRING" id="269800.Tfu_1410"/>
<dbReference type="DrugBank" id="DB02251">
    <property type="generic name" value="O-Succinylbenzoate"/>
</dbReference>
<dbReference type="KEGG" id="tfu:Tfu_1410"/>
<dbReference type="eggNOG" id="COG4948">
    <property type="taxonomic scope" value="Bacteria"/>
</dbReference>
<dbReference type="HOGENOM" id="CLU_057696_0_0_11"/>
<dbReference type="OrthoDB" id="3725747at2"/>
<dbReference type="BRENDA" id="4.2.1.113">
    <property type="organism ID" value="6298"/>
</dbReference>
<dbReference type="UniPathway" id="UPA00079"/>
<dbReference type="UniPathway" id="UPA01057">
    <property type="reaction ID" value="UER00165"/>
</dbReference>
<dbReference type="EvolutionaryTrace" id="Q47Q21"/>
<dbReference type="GO" id="GO:0000287">
    <property type="term" value="F:magnesium ion binding"/>
    <property type="evidence" value="ECO:0007669"/>
    <property type="project" value="UniProtKB-UniRule"/>
</dbReference>
<dbReference type="GO" id="GO:0043748">
    <property type="term" value="F:O-succinylbenzoate synthase activity"/>
    <property type="evidence" value="ECO:0007669"/>
    <property type="project" value="UniProtKB-EC"/>
</dbReference>
<dbReference type="GO" id="GO:0009063">
    <property type="term" value="P:amino acid catabolic process"/>
    <property type="evidence" value="ECO:0007669"/>
    <property type="project" value="InterPro"/>
</dbReference>
<dbReference type="GO" id="GO:0009234">
    <property type="term" value="P:menaquinone biosynthetic process"/>
    <property type="evidence" value="ECO:0007669"/>
    <property type="project" value="UniProtKB-UniRule"/>
</dbReference>
<dbReference type="CDD" id="cd03320">
    <property type="entry name" value="OSBS"/>
    <property type="match status" value="1"/>
</dbReference>
<dbReference type="Gene3D" id="3.20.20.120">
    <property type="entry name" value="Enolase-like C-terminal domain"/>
    <property type="match status" value="1"/>
</dbReference>
<dbReference type="HAMAP" id="MF_00470">
    <property type="entry name" value="MenC_1"/>
    <property type="match status" value="1"/>
</dbReference>
<dbReference type="InterPro" id="IPR036849">
    <property type="entry name" value="Enolase-like_C_sf"/>
</dbReference>
<dbReference type="InterPro" id="IPR029065">
    <property type="entry name" value="Enolase_C-like"/>
</dbReference>
<dbReference type="InterPro" id="IPR018110">
    <property type="entry name" value="Mandel_Rmase/mucon_lact_enz_CS"/>
</dbReference>
<dbReference type="InterPro" id="IPR013342">
    <property type="entry name" value="Mandelate_racemase_C"/>
</dbReference>
<dbReference type="InterPro" id="IPR010196">
    <property type="entry name" value="OSB_synthase_MenC1"/>
</dbReference>
<dbReference type="NCBIfam" id="NF002782">
    <property type="entry name" value="PRK02901.1"/>
    <property type="match status" value="1"/>
</dbReference>
<dbReference type="PANTHER" id="PTHR48073:SF2">
    <property type="entry name" value="O-SUCCINYLBENZOATE SYNTHASE"/>
    <property type="match status" value="1"/>
</dbReference>
<dbReference type="PANTHER" id="PTHR48073">
    <property type="entry name" value="O-SUCCINYLBENZOATE SYNTHASE-RELATED"/>
    <property type="match status" value="1"/>
</dbReference>
<dbReference type="Pfam" id="PF18374">
    <property type="entry name" value="Enolase_like_N"/>
    <property type="match status" value="1"/>
</dbReference>
<dbReference type="Pfam" id="PF13378">
    <property type="entry name" value="MR_MLE_C"/>
    <property type="match status" value="1"/>
</dbReference>
<dbReference type="SFLD" id="SFLDG00180">
    <property type="entry name" value="muconate_cycloisomerase"/>
    <property type="match status" value="1"/>
</dbReference>
<dbReference type="SFLD" id="SFLDF00009">
    <property type="entry name" value="o-succinylbenzoate_synthase"/>
    <property type="match status" value="1"/>
</dbReference>
<dbReference type="SMART" id="SM00922">
    <property type="entry name" value="MR_MLE"/>
    <property type="match status" value="1"/>
</dbReference>
<dbReference type="SUPFAM" id="SSF51604">
    <property type="entry name" value="Enolase C-terminal domain-like"/>
    <property type="match status" value="1"/>
</dbReference>
<dbReference type="PROSITE" id="PS00909">
    <property type="entry name" value="MR_MLE_2"/>
    <property type="match status" value="1"/>
</dbReference>
<name>MENC_THEFY</name>
<protein>
    <recommendedName>
        <fullName evidence="1 4">o-succinylbenzoate synthase</fullName>
        <shortName evidence="1">OSB synthase</shortName>
        <shortName evidence="1 4">OSBS</shortName>
        <ecNumber evidence="1 2 3">4.2.1.113</ecNumber>
    </recommendedName>
    <alternativeName>
        <fullName evidence="1">4-(2'-carboxyphenyl)-4-oxybutyric acid synthase</fullName>
    </alternativeName>
    <alternativeName>
        <fullName evidence="1">o-succinylbenzoic acid synthase</fullName>
    </alternativeName>
</protein>
<feature type="chain" id="PRO_0000455094" description="o-succinylbenzoate synthase">
    <location>
        <begin position="1"/>
        <end position="317"/>
    </location>
</feature>
<feature type="active site" description="Proton donor" evidence="1">
    <location>
        <position position="97"/>
    </location>
</feature>
<feature type="active site" description="Proton acceptor" evidence="1">
    <location>
        <position position="201"/>
    </location>
</feature>
<feature type="binding site" evidence="2 7">
    <location>
        <begin position="71"/>
        <end position="73"/>
    </location>
    <ligand>
        <name>2-succinylbenzoate</name>
        <dbReference type="ChEBI" id="CHEBI:18325"/>
    </ligand>
</feature>
<feature type="binding site" evidence="2 7">
    <location>
        <position position="95"/>
    </location>
    <ligand>
        <name>2-succinylbenzoate</name>
        <dbReference type="ChEBI" id="CHEBI:18325"/>
    </ligand>
</feature>
<feature type="binding site" evidence="2 7">
    <location>
        <begin position="128"/>
        <end position="130"/>
    </location>
    <ligand>
        <name>2-succinylbenzoate</name>
        <dbReference type="ChEBI" id="CHEBI:18325"/>
    </ligand>
</feature>
<feature type="binding site" evidence="1 2 7">
    <location>
        <position position="128"/>
    </location>
    <ligand>
        <name>Mg(2+)</name>
        <dbReference type="ChEBI" id="CHEBI:18420"/>
    </ligand>
</feature>
<feature type="binding site" evidence="1 2 7">
    <location>
        <position position="154"/>
    </location>
    <ligand>
        <name>Mg(2+)</name>
        <dbReference type="ChEBI" id="CHEBI:18420"/>
    </ligand>
</feature>
<feature type="binding site" evidence="1 2 7">
    <location>
        <position position="177"/>
    </location>
    <ligand>
        <name>Mg(2+)</name>
        <dbReference type="ChEBI" id="CHEBI:18420"/>
    </ligand>
</feature>
<feature type="binding site" evidence="2 7">
    <location>
        <position position="201"/>
    </location>
    <ligand>
        <name>2-succinylbenzoate</name>
        <dbReference type="ChEBI" id="CHEBI:18325"/>
    </ligand>
</feature>
<feature type="mutagenesis site" description="5.6-fold decrease in catalytic efficiency." evidence="2">
    <original>F</original>
    <variation>A</variation>
    <location>
        <position position="14"/>
    </location>
</feature>
<feature type="mutagenesis site" description="7.7-fold decrease in catalytic efficiency. 71-fold decrease in catalytic efficiency; when associated with A-40. 166-fold decrease in catalytic efficiency; when associated with A-37." evidence="2">
    <original>R</original>
    <variation>A</variation>
    <location>
        <position position="15"/>
    </location>
</feature>
<feature type="mutagenesis site" description="2.7-fold decrease in catalytic efficiency. 166-fold decrease in catalytic efficiency; when associated with A-15." evidence="2">
    <original>F</original>
    <variation>A</variation>
    <location>
        <position position="37"/>
    </location>
</feature>
<feature type="mutagenesis site" description="2-fold decrease in catalytic efficiency. 71-fold decrease in catalytic efficiency; when associated with A-15." evidence="2">
    <original>Y</original>
    <variation>A</variation>
    <location>
        <position position="40"/>
    </location>
</feature>
<feature type="mutagenesis site" description="20-fold decrease in catalytic efficiency. 33-fold decrease in catalytic efficiency; when associated with L-73." evidence="2">
    <original>N</original>
    <variation>A</variation>
    <location>
        <position position="71"/>
    </location>
</feature>
<feature type="mutagenesis site" description="1111-fold decrease in catalytic efficiency; when associated with V-73." evidence="2">
    <original>N</original>
    <variation>L</variation>
    <location>
        <position position="71"/>
    </location>
</feature>
<feature type="mutagenesis site" description="2-fold decrease in catalytic efficiency." evidence="2">
    <original>T</original>
    <variation>A</variation>
    <location>
        <position position="73"/>
    </location>
</feature>
<feature type="mutagenesis site" description="2-fold decrease in catalytic efficiency. 33-fold decrease in catalytic efficiency; when associated with A-71." evidence="2">
    <original>T</original>
    <variation>L</variation>
    <location>
        <position position="73"/>
    </location>
</feature>
<feature type="mutagenesis site" description="1111-fold decrease in catalytic efficiency; when associated with L-71." evidence="2">
    <original>T</original>
    <variation>V</variation>
    <location>
        <position position="73"/>
    </location>
</feature>
<feature type="mutagenesis site" description="3-fold decrease in catalytic efficiency." evidence="2">
    <original>R</original>
    <variation>M</variation>
    <location>
        <position position="126"/>
    </location>
</feature>
<feature type="mutagenesis site" description="3.3-fold decrease in catalytic efficiency." evidence="2">
    <original>V</original>
    <variation>L</variation>
    <location>
        <position position="228"/>
    </location>
</feature>
<feature type="mutagenesis site" description="3.6-fold decrease in catalytic efficiency." evidence="2">
    <original>G</original>
    <variation>A</variation>
    <location>
        <position position="252"/>
    </location>
</feature>
<feature type="mutagenesis site" description="33-fold decrease in catalytic efficiency." evidence="2">
    <original>G</original>
    <variation>T</variation>
    <location>
        <position position="252"/>
    </location>
</feature>
<feature type="strand" evidence="8">
    <location>
        <begin position="2"/>
        <end position="14"/>
    </location>
</feature>
<feature type="strand" evidence="8">
    <location>
        <begin position="17"/>
        <end position="26"/>
    </location>
</feature>
<feature type="strand" evidence="8">
    <location>
        <begin position="31"/>
        <end position="34"/>
    </location>
</feature>
<feature type="helix" evidence="8">
    <location>
        <begin position="42"/>
        <end position="57"/>
    </location>
</feature>
<feature type="strand" evidence="8">
    <location>
        <begin position="66"/>
        <end position="70"/>
    </location>
</feature>
<feature type="strand" evidence="8">
    <location>
        <begin position="72"/>
        <end position="74"/>
    </location>
</feature>
<feature type="helix" evidence="8">
    <location>
        <begin position="79"/>
        <end position="89"/>
    </location>
</feature>
<feature type="strand" evidence="8">
    <location>
        <begin position="92"/>
        <end position="97"/>
    </location>
</feature>
<feature type="helix" evidence="8">
    <location>
        <begin position="108"/>
        <end position="119"/>
    </location>
</feature>
<feature type="strand" evidence="8">
    <location>
        <begin position="123"/>
        <end position="128"/>
    </location>
</feature>
<feature type="helix" evidence="8">
    <location>
        <begin position="135"/>
        <end position="145"/>
    </location>
</feature>
<feature type="helix" evidence="8">
    <location>
        <begin position="146"/>
        <end position="148"/>
    </location>
</feature>
<feature type="strand" evidence="8">
    <location>
        <begin position="150"/>
        <end position="154"/>
    </location>
</feature>
<feature type="strand" evidence="8">
    <location>
        <begin position="157"/>
        <end position="159"/>
    </location>
</feature>
<feature type="helix" evidence="8">
    <location>
        <begin position="160"/>
        <end position="169"/>
    </location>
</feature>
<feature type="strand" evidence="8">
    <location>
        <begin position="174"/>
        <end position="176"/>
    </location>
</feature>
<feature type="helix" evidence="9">
    <location>
        <begin position="178"/>
        <end position="181"/>
    </location>
</feature>
<feature type="strand" evidence="9">
    <location>
        <begin position="182"/>
        <end position="184"/>
    </location>
</feature>
<feature type="turn" evidence="8">
    <location>
        <begin position="189"/>
        <end position="193"/>
    </location>
</feature>
<feature type="strand" evidence="8">
    <location>
        <begin position="196"/>
        <end position="200"/>
    </location>
</feature>
<feature type="helix" evidence="8">
    <location>
        <begin position="202"/>
        <end position="205"/>
    </location>
</feature>
<feature type="helix" evidence="8">
    <location>
        <begin position="208"/>
        <end position="217"/>
    </location>
</feature>
<feature type="strand" evidence="8">
    <location>
        <begin position="222"/>
        <end position="225"/>
    </location>
</feature>
<feature type="helix" evidence="8">
    <location>
        <begin position="231"/>
        <end position="243"/>
    </location>
</feature>
<feature type="helix" evidence="8">
    <location>
        <begin position="255"/>
        <end position="258"/>
    </location>
</feature>
<feature type="strand" evidence="8">
    <location>
        <begin position="263"/>
        <end position="266"/>
    </location>
</feature>
<feature type="strand" evidence="8">
    <location>
        <begin position="274"/>
        <end position="276"/>
    </location>
</feature>
<feature type="helix" evidence="8">
    <location>
        <begin position="284"/>
        <end position="289"/>
    </location>
</feature>
<feature type="helix" evidence="8">
    <location>
        <begin position="295"/>
        <end position="309"/>
    </location>
</feature>
<evidence type="ECO:0000255" key="1">
    <source>
        <dbReference type="HAMAP-Rule" id="MF_00470"/>
    </source>
</evidence>
<evidence type="ECO:0000269" key="2">
    <source>
    </source>
</evidence>
<evidence type="ECO:0000269" key="3">
    <source>
    </source>
</evidence>
<evidence type="ECO:0000303" key="4">
    <source>
    </source>
</evidence>
<evidence type="ECO:0000312" key="5">
    <source>
        <dbReference type="EMBL" id="AAZ55448.1"/>
    </source>
</evidence>
<evidence type="ECO:0007744" key="6">
    <source>
        <dbReference type="PDB" id="2OPJ"/>
    </source>
</evidence>
<evidence type="ECO:0007744" key="7">
    <source>
        <dbReference type="PDB" id="2QVH"/>
    </source>
</evidence>
<evidence type="ECO:0007829" key="8">
    <source>
        <dbReference type="PDB" id="2OPJ"/>
    </source>
</evidence>
<evidence type="ECO:0007829" key="9">
    <source>
        <dbReference type="PDB" id="2QVH"/>
    </source>
</evidence>
<reference key="1">
    <citation type="journal article" date="2007" name="J. Bacteriol.">
        <title>Genome sequence and analysis of the soil cellulolytic actinomycete Thermobifida fusca YX.</title>
        <authorList>
            <person name="Lykidis A."/>
            <person name="Mavromatis K."/>
            <person name="Ivanova N."/>
            <person name="Anderson I."/>
            <person name="Land M."/>
            <person name="DiBartolo G."/>
            <person name="Martinez M."/>
            <person name="Lapidus A."/>
            <person name="Lucas S."/>
            <person name="Copeland A."/>
            <person name="Richardson P."/>
            <person name="Wilson D.B."/>
            <person name="Kyrpides N."/>
        </authorList>
    </citation>
    <scope>NUCLEOTIDE SEQUENCE [LARGE SCALE GENOMIC DNA]</scope>
    <source>
        <strain>YX</strain>
    </source>
</reference>
<reference key="2">
    <citation type="journal article" date="2014" name="Proc. Natl. Acad. Sci. U.S.A.">
        <title>Loss of quaternary structure is associated with rapid sequence divergence in the OSBS family.</title>
        <authorList>
            <person name="Odokonyero D."/>
            <person name="Sakai A."/>
            <person name="Patskovsky Y."/>
            <person name="Malashkevich V.N."/>
            <person name="Fedorov A.A."/>
            <person name="Bonanno J.B."/>
            <person name="Fedorov E.V."/>
            <person name="Toro R."/>
            <person name="Agarwal R."/>
            <person name="Wang C."/>
            <person name="Ozerova N.D."/>
            <person name="Yew W.S."/>
            <person name="Sauder J.M."/>
            <person name="Swaminathan S."/>
            <person name="Burley S.K."/>
            <person name="Almo S.C."/>
            <person name="Glasner M.E."/>
        </authorList>
    </citation>
    <scope>FUNCTION</scope>
    <scope>CATALYTIC ACTIVITY</scope>
</reference>
<reference evidence="6 7" key="3">
    <citation type="journal article" date="2013" name="Biochemistry">
        <title>Divergent evolution of ligand binding in the o-succinylbenzoate synthase family.</title>
        <authorList>
            <person name="Odokonyero D."/>
            <person name="Ragumani S."/>
            <person name="Lopez M.S."/>
            <person name="Bonanno J.B."/>
            <person name="Ozerova N.D."/>
            <person name="Woodard D.R."/>
            <person name="Machala B.W."/>
            <person name="Swaminathan S."/>
            <person name="Burley S.K."/>
            <person name="Almo S.C."/>
            <person name="Glasner M.E."/>
        </authorList>
    </citation>
    <scope>X-RAY CRYSTALLOGRAPHY (1.60 ANGSTROMS) OF 2-317 OF APOENZYME AND IN COMPLEX WITH 2-SUCCINYLBENZOIC ACID AND MAGNESIUM</scope>
    <scope>FUNCTION</scope>
    <scope>CATALYTIC ACTIVITY</scope>
    <scope>COFACTOR</scope>
    <scope>BIOPHYSICOCHEMICAL PROPERTIES</scope>
    <scope>SUBUNIT</scope>
    <scope>DOMAIN</scope>
    <scope>MUTAGENESIS OF PHE-14; ARG-15; PHE-37; TYR-40; ASN-71; THR-73; ARG-126; VAL-228 AND GLY-252</scope>
    <source>
        <strain>YX</strain>
    </source>
</reference>
<comment type="function">
    <text evidence="2 3">Converts 2-succinyl-6-hydroxy-2,4-cyclohexadiene-1-carboxylate (SHCHC) to 2-succinylbenzoate (OSB) (PubMed:24060347, PubMed:24872444). Does not show N-succinylamino acid racemase (NSAR) activity with N-succinyl-L-phenylglycine as substrate (PubMed:24872444).</text>
</comment>
<comment type="catalytic activity">
    <reaction evidence="1 2 3">
        <text>(1R,6R)-6-hydroxy-2-succinyl-cyclohexa-2,4-diene-1-carboxylate = 2-succinylbenzoate + H2O</text>
        <dbReference type="Rhea" id="RHEA:10196"/>
        <dbReference type="ChEBI" id="CHEBI:15377"/>
        <dbReference type="ChEBI" id="CHEBI:18325"/>
        <dbReference type="ChEBI" id="CHEBI:58689"/>
        <dbReference type="EC" id="4.2.1.113"/>
    </reaction>
</comment>
<comment type="cofactor">
    <cofactor evidence="1 2">
        <name>a divalent metal cation</name>
        <dbReference type="ChEBI" id="CHEBI:60240"/>
    </cofactor>
</comment>
<comment type="biophysicochemical properties">
    <kinetics>
        <KM evidence="2">182 uM for SHCHC</KM>
        <text evidence="2">kcat is 122 sec(-1) with SHCHC as substrate.</text>
    </kinetics>
</comment>
<comment type="pathway">
    <text evidence="1">Quinol/quinone metabolism; 1,4-dihydroxy-2-naphthoate biosynthesis; 1,4-dihydroxy-2-naphthoate from chorismate: step 4/7.</text>
</comment>
<comment type="pathway">
    <text evidence="1">Quinol/quinone metabolism; menaquinone biosynthesis.</text>
</comment>
<comment type="subunit">
    <text evidence="2">Monomer.</text>
</comment>
<comment type="domain">
    <text evidence="2">The 20s loop, a flexible loop in the active site that permits ligand binding and release in most enolase superfamily proteins, has a four-amino acid deletion and is well-ordered in T.fusca OSBS.</text>
</comment>
<comment type="similarity">
    <text evidence="1">Belongs to the mandelate racemase/muconate lactonizing enzyme family. MenC type 1 subfamily.</text>
</comment>
<proteinExistence type="evidence at protein level"/>
<gene>
    <name evidence="1" type="primary">menC</name>
    <name evidence="5" type="ordered locus">Tfu_1410</name>
</gene>